<evidence type="ECO:0000255" key="1">
    <source>
        <dbReference type="HAMAP-Rule" id="MF_01909"/>
    </source>
</evidence>
<feature type="chain" id="PRO_1000216180" description="Transcription factor E">
    <location>
        <begin position="1"/>
        <end position="178"/>
    </location>
</feature>
<feature type="domain" description="HTH TFE/IIEalpha-type" evidence="1">
    <location>
        <begin position="4"/>
        <end position="88"/>
    </location>
</feature>
<gene>
    <name evidence="1" type="primary">tfe</name>
    <name type="ordered locus">M1627_1951</name>
</gene>
<dbReference type="EMBL" id="CP001401">
    <property type="protein sequence ID" value="ACP55822.1"/>
    <property type="molecule type" value="Genomic_DNA"/>
</dbReference>
<dbReference type="RefSeq" id="WP_012711838.1">
    <property type="nucleotide sequence ID" value="NC_012632.1"/>
</dbReference>
<dbReference type="SMR" id="C3MZJ0"/>
<dbReference type="GeneID" id="84062185"/>
<dbReference type="KEGG" id="sim:M1627_1951"/>
<dbReference type="HOGENOM" id="CLU_100097_0_0_2"/>
<dbReference type="Proteomes" id="UP000002307">
    <property type="component" value="Chromosome"/>
</dbReference>
<dbReference type="GO" id="GO:0003677">
    <property type="term" value="F:DNA binding"/>
    <property type="evidence" value="ECO:0007669"/>
    <property type="project" value="UniProtKB-KW"/>
</dbReference>
<dbReference type="GO" id="GO:0006355">
    <property type="term" value="P:regulation of DNA-templated transcription"/>
    <property type="evidence" value="ECO:0007669"/>
    <property type="project" value="InterPro"/>
</dbReference>
<dbReference type="GO" id="GO:0006367">
    <property type="term" value="P:transcription initiation at RNA polymerase II promoter"/>
    <property type="evidence" value="ECO:0007669"/>
    <property type="project" value="InterPro"/>
</dbReference>
<dbReference type="Gene3D" id="1.10.10.10">
    <property type="entry name" value="Winged helix-like DNA-binding domain superfamily/Winged helix DNA-binding domain"/>
    <property type="match status" value="1"/>
</dbReference>
<dbReference type="HAMAP" id="MF_01909">
    <property type="entry name" value="TFE_arch"/>
    <property type="match status" value="1"/>
</dbReference>
<dbReference type="InterPro" id="IPR016481">
    <property type="entry name" value="TF_E_archaea"/>
</dbReference>
<dbReference type="InterPro" id="IPR039997">
    <property type="entry name" value="TFE"/>
</dbReference>
<dbReference type="InterPro" id="IPR017919">
    <property type="entry name" value="TFIIE/TFIIEa_HTH"/>
</dbReference>
<dbReference type="InterPro" id="IPR002853">
    <property type="entry name" value="TFIIE_asu"/>
</dbReference>
<dbReference type="InterPro" id="IPR024550">
    <property type="entry name" value="TFIIEa/SarR/Rpc3_HTH_dom"/>
</dbReference>
<dbReference type="InterPro" id="IPR036388">
    <property type="entry name" value="WH-like_DNA-bd_sf"/>
</dbReference>
<dbReference type="InterPro" id="IPR036390">
    <property type="entry name" value="WH_DNA-bd_sf"/>
</dbReference>
<dbReference type="PANTHER" id="PTHR13097:SF7">
    <property type="entry name" value="GENERAL TRANSCRIPTION FACTOR IIE SUBUNIT 1"/>
    <property type="match status" value="1"/>
</dbReference>
<dbReference type="PANTHER" id="PTHR13097">
    <property type="entry name" value="TRANSCRIPTION INITIATION FACTOR IIE, ALPHA SUBUNIT"/>
    <property type="match status" value="1"/>
</dbReference>
<dbReference type="Pfam" id="PF02002">
    <property type="entry name" value="TFIIE_alpha"/>
    <property type="match status" value="1"/>
</dbReference>
<dbReference type="PIRSF" id="PIRSF006373">
    <property type="entry name" value="TF_E_archaea"/>
    <property type="match status" value="1"/>
</dbReference>
<dbReference type="SMART" id="SM00531">
    <property type="entry name" value="TFIIE"/>
    <property type="match status" value="1"/>
</dbReference>
<dbReference type="SUPFAM" id="SSF46785">
    <property type="entry name" value="Winged helix' DNA-binding domain"/>
    <property type="match status" value="1"/>
</dbReference>
<dbReference type="PROSITE" id="PS51344">
    <property type="entry name" value="HTH_TFE_IIE"/>
    <property type="match status" value="1"/>
</dbReference>
<name>TFE_SACI3</name>
<comment type="function">
    <text evidence="1">Transcription factor that plays a role in the activation of archaeal genes transcribed by RNA polymerase. Facilitates transcription initiation by enhancing TATA-box recognition by TATA-box-binding protein (Tbp), and transcription factor B (Tfb) and RNA polymerase recruitment. Not absolutely required for transcription in vitro, but particularly important in cases where Tbp or Tfb function is not optimal. It dynamically alters the nucleic acid-binding properties of RNA polymerases by stabilizing the initiation complex and destabilizing elongation complexes. Seems to translocate with the RNA polymerase following initiation and acts by binding to the non template strand of the transcription bubble in elongation complexes.</text>
</comment>
<comment type="subunit">
    <text evidence="1">Monomer. Interaction with RNA polymerase subunits RpoF and RpoE is necessary for Tfe stimulatory transcription activity. Able to interact with Tbp and RNA polymerase in the absence of DNA promoter. Interacts both with the preinitiation and elongation complexes.</text>
</comment>
<comment type="domain">
    <text evidence="1">The winged helix domain is involved in binding to DNA in the preinitiation complex.</text>
</comment>
<comment type="similarity">
    <text evidence="1">Belongs to the TFE family.</text>
</comment>
<reference key="1">
    <citation type="journal article" date="2009" name="Proc. Natl. Acad. Sci. U.S.A.">
        <title>Biogeography of the Sulfolobus islandicus pan-genome.</title>
        <authorList>
            <person name="Reno M.L."/>
            <person name="Held N.L."/>
            <person name="Fields C.J."/>
            <person name="Burke P.V."/>
            <person name="Whitaker R.J."/>
        </authorList>
    </citation>
    <scope>NUCLEOTIDE SEQUENCE [LARGE SCALE GENOMIC DNA]</scope>
    <source>
        <strain>M.16.27</strain>
    </source>
</reference>
<protein>
    <recommendedName>
        <fullName evidence="1">Transcription factor E</fullName>
        <shortName evidence="1">TFE</shortName>
    </recommendedName>
    <alternativeName>
        <fullName evidence="1">TFIIE subunit alpha homolog</fullName>
    </alternativeName>
    <alternativeName>
        <fullName evidence="1">Transcription initiation factor TFIIE</fullName>
    </alternativeName>
</protein>
<organism>
    <name type="scientific">Saccharolobus islandicus (strain M.16.27)</name>
    <name type="common">Sulfolobus islandicus</name>
    <dbReference type="NCBI Taxonomy" id="427318"/>
    <lineage>
        <taxon>Archaea</taxon>
        <taxon>Thermoproteota</taxon>
        <taxon>Thermoprotei</taxon>
        <taxon>Sulfolobales</taxon>
        <taxon>Sulfolobaceae</taxon>
        <taxon>Saccharolobus</taxon>
    </lineage>
</organism>
<proteinExistence type="inferred from homology"/>
<accession>C3MZJ0</accession>
<sequence>MVNAEDLFINLAKSLLGDDVIDVLRVLLEKGTEMTDEEIANQLNIKVNDVRKKLNLLEEQGFVSYRKTRDKDSGWFIYYWKPNIDQINEILLNRKRLILDKLKSRLEYEKNNTFFICPQDNSRYSFEEAFENEFKCLKCGSQLTYYDTEKIKSFLEQKIRQIEEEIDKETKLGANKSH</sequence>
<keyword id="KW-0238">DNA-binding</keyword>
<keyword id="KW-0804">Transcription</keyword>
<keyword id="KW-0805">Transcription regulation</keyword>